<protein>
    <recommendedName>
        <fullName evidence="1">Chromosomal replication initiator protein DnaA</fullName>
    </recommendedName>
</protein>
<sequence>MTNSEQERWSRVKGRLRSTVGEDVYTSWFARMDLEAVQDESVHLSVPTRFLKSWIQAHYAERVLSAWQAEMPEVHRIDLSVRTAMRCATPAKEAPAAVEARRPERSDAKPVSDARAPVMTPVAASHDALGGSPLDPRLTFASFVVGRANTLAHAAARQVADGRRGDPVMFNPLYIHAGVGLGKTHLLQAVTWAGNAGGERKVLYLTAEKFMYGFVAALKSQTALAFKEALRGIDVLVIDDLQFLQGKSTQAEFCHTLNALIDAGRQVVIAADRPPSDLESLDDRVRSRLAGGLVVEMATLGEDLRLGILKSRVAAARAHHASFDVPEAVLDYLARSITHNGRDLEGAINRLLAHSKLNNQPVTLDMAEREVRDLVRPQEPKRIKIEDIQRVVARQYNVSRSDLLSSRRTANVVRPRQVAMYLAKTLTLRSLPEIGRRFGGRDHTTVLHAVRKIEALVGKDVALNDEVESLKRQLQD</sequence>
<evidence type="ECO:0000255" key="1">
    <source>
        <dbReference type="HAMAP-Rule" id="MF_00377"/>
    </source>
</evidence>
<evidence type="ECO:0000256" key="2">
    <source>
        <dbReference type="SAM" id="MobiDB-lite"/>
    </source>
</evidence>
<organism>
    <name type="scientific">Bradyrhizobium sp. (strain ORS 278)</name>
    <dbReference type="NCBI Taxonomy" id="114615"/>
    <lineage>
        <taxon>Bacteria</taxon>
        <taxon>Pseudomonadati</taxon>
        <taxon>Pseudomonadota</taxon>
        <taxon>Alphaproteobacteria</taxon>
        <taxon>Hyphomicrobiales</taxon>
        <taxon>Nitrobacteraceae</taxon>
        <taxon>Bradyrhizobium</taxon>
    </lineage>
</organism>
<reference key="1">
    <citation type="journal article" date="2007" name="Science">
        <title>Legumes symbioses: absence of nod genes in photosynthetic bradyrhizobia.</title>
        <authorList>
            <person name="Giraud E."/>
            <person name="Moulin L."/>
            <person name="Vallenet D."/>
            <person name="Barbe V."/>
            <person name="Cytryn E."/>
            <person name="Avarre J.-C."/>
            <person name="Jaubert M."/>
            <person name="Simon D."/>
            <person name="Cartieaux F."/>
            <person name="Prin Y."/>
            <person name="Bena G."/>
            <person name="Hannibal L."/>
            <person name="Fardoux J."/>
            <person name="Kojadinovic M."/>
            <person name="Vuillet L."/>
            <person name="Lajus A."/>
            <person name="Cruveiller S."/>
            <person name="Rouy Z."/>
            <person name="Mangenot S."/>
            <person name="Segurens B."/>
            <person name="Dossat C."/>
            <person name="Franck W.L."/>
            <person name="Chang W.-S."/>
            <person name="Saunders E."/>
            <person name="Bruce D."/>
            <person name="Richardson P."/>
            <person name="Normand P."/>
            <person name="Dreyfus B."/>
            <person name="Pignol D."/>
            <person name="Stacey G."/>
            <person name="Emerich D."/>
            <person name="Vermeglio A."/>
            <person name="Medigue C."/>
            <person name="Sadowsky M."/>
        </authorList>
    </citation>
    <scope>NUCLEOTIDE SEQUENCE [LARGE SCALE GENOMIC DNA]</scope>
    <source>
        <strain>ORS 278</strain>
    </source>
</reference>
<comment type="function">
    <text evidence="1">Plays an essential role in the initiation and regulation of chromosomal replication. ATP-DnaA binds to the origin of replication (oriC) to initiate formation of the DNA replication initiation complex once per cell cycle. Binds the DnaA box (a 9 base pair repeat at the origin) and separates the double-stranded (ds)DNA. Forms a right-handed helical filament on oriC DNA; dsDNA binds to the exterior of the filament while single-stranded (ss)DNA is stabiized in the filament's interior. The ATP-DnaA-oriC complex binds and stabilizes one strand of the AT-rich DNA unwinding element (DUE), permitting loading of DNA polymerase. After initiation quickly degrades to an ADP-DnaA complex that is not apt for DNA replication. Binds acidic phospholipids.</text>
</comment>
<comment type="subunit">
    <text evidence="1">Oligomerizes as a right-handed, spiral filament on DNA at oriC.</text>
</comment>
<comment type="subcellular location">
    <subcellularLocation>
        <location evidence="1">Cytoplasm</location>
    </subcellularLocation>
</comment>
<comment type="domain">
    <text evidence="1">Domain I is involved in oligomerization and binding regulators, domain II is flexibile and of varying length in different bacteria, domain III forms the AAA+ region, while domain IV binds dsDNA.</text>
</comment>
<comment type="similarity">
    <text evidence="1">Belongs to the DnaA family.</text>
</comment>
<proteinExistence type="inferred from homology"/>
<name>DNAA_BRASO</name>
<accession>A4YJ98</accession>
<keyword id="KW-0067">ATP-binding</keyword>
<keyword id="KW-0963">Cytoplasm</keyword>
<keyword id="KW-0235">DNA replication</keyword>
<keyword id="KW-0238">DNA-binding</keyword>
<keyword id="KW-0446">Lipid-binding</keyword>
<keyword id="KW-0547">Nucleotide-binding</keyword>
<keyword id="KW-1185">Reference proteome</keyword>
<dbReference type="EMBL" id="CU234118">
    <property type="protein sequence ID" value="CAL73974.1"/>
    <property type="molecule type" value="Genomic_DNA"/>
</dbReference>
<dbReference type="RefSeq" id="WP_011923277.1">
    <property type="nucleotide sequence ID" value="NC_009445.1"/>
</dbReference>
<dbReference type="SMR" id="A4YJ98"/>
<dbReference type="STRING" id="114615.BRADO0001"/>
<dbReference type="KEGG" id="bra:BRADO0001"/>
<dbReference type="eggNOG" id="COG0593">
    <property type="taxonomic scope" value="Bacteria"/>
</dbReference>
<dbReference type="HOGENOM" id="CLU_026910_3_0_5"/>
<dbReference type="OrthoDB" id="9807019at2"/>
<dbReference type="Proteomes" id="UP000001994">
    <property type="component" value="Chromosome"/>
</dbReference>
<dbReference type="GO" id="GO:0005737">
    <property type="term" value="C:cytoplasm"/>
    <property type="evidence" value="ECO:0007669"/>
    <property type="project" value="UniProtKB-SubCell"/>
</dbReference>
<dbReference type="GO" id="GO:0005886">
    <property type="term" value="C:plasma membrane"/>
    <property type="evidence" value="ECO:0007669"/>
    <property type="project" value="TreeGrafter"/>
</dbReference>
<dbReference type="GO" id="GO:0005524">
    <property type="term" value="F:ATP binding"/>
    <property type="evidence" value="ECO:0007669"/>
    <property type="project" value="UniProtKB-UniRule"/>
</dbReference>
<dbReference type="GO" id="GO:0016887">
    <property type="term" value="F:ATP hydrolysis activity"/>
    <property type="evidence" value="ECO:0007669"/>
    <property type="project" value="InterPro"/>
</dbReference>
<dbReference type="GO" id="GO:0003688">
    <property type="term" value="F:DNA replication origin binding"/>
    <property type="evidence" value="ECO:0007669"/>
    <property type="project" value="UniProtKB-UniRule"/>
</dbReference>
<dbReference type="GO" id="GO:0008289">
    <property type="term" value="F:lipid binding"/>
    <property type="evidence" value="ECO:0007669"/>
    <property type="project" value="UniProtKB-KW"/>
</dbReference>
<dbReference type="GO" id="GO:0006270">
    <property type="term" value="P:DNA replication initiation"/>
    <property type="evidence" value="ECO:0007669"/>
    <property type="project" value="UniProtKB-UniRule"/>
</dbReference>
<dbReference type="GO" id="GO:0006275">
    <property type="term" value="P:regulation of DNA replication"/>
    <property type="evidence" value="ECO:0007669"/>
    <property type="project" value="UniProtKB-UniRule"/>
</dbReference>
<dbReference type="CDD" id="cd00009">
    <property type="entry name" value="AAA"/>
    <property type="match status" value="1"/>
</dbReference>
<dbReference type="CDD" id="cd06571">
    <property type="entry name" value="Bac_DnaA_C"/>
    <property type="match status" value="1"/>
</dbReference>
<dbReference type="FunFam" id="1.10.1750.10:FF:000002">
    <property type="entry name" value="Chromosomal replication initiator protein DnaA"/>
    <property type="match status" value="1"/>
</dbReference>
<dbReference type="FunFam" id="3.40.50.300:FF:000668">
    <property type="entry name" value="Chromosomal replication initiator protein DnaA"/>
    <property type="match status" value="1"/>
</dbReference>
<dbReference type="Gene3D" id="1.10.1750.10">
    <property type="match status" value="1"/>
</dbReference>
<dbReference type="Gene3D" id="1.10.8.60">
    <property type="match status" value="1"/>
</dbReference>
<dbReference type="Gene3D" id="3.30.300.180">
    <property type="match status" value="1"/>
</dbReference>
<dbReference type="Gene3D" id="3.40.50.300">
    <property type="entry name" value="P-loop containing nucleotide triphosphate hydrolases"/>
    <property type="match status" value="1"/>
</dbReference>
<dbReference type="HAMAP" id="MF_00377">
    <property type="entry name" value="DnaA_bact"/>
    <property type="match status" value="1"/>
</dbReference>
<dbReference type="InterPro" id="IPR003593">
    <property type="entry name" value="AAA+_ATPase"/>
</dbReference>
<dbReference type="InterPro" id="IPR001957">
    <property type="entry name" value="Chromosome_initiator_DnaA"/>
</dbReference>
<dbReference type="InterPro" id="IPR020591">
    <property type="entry name" value="Chromosome_initiator_DnaA-like"/>
</dbReference>
<dbReference type="InterPro" id="IPR018312">
    <property type="entry name" value="Chromosome_initiator_DnaA_CS"/>
</dbReference>
<dbReference type="InterPro" id="IPR013159">
    <property type="entry name" value="DnaA_C"/>
</dbReference>
<dbReference type="InterPro" id="IPR013317">
    <property type="entry name" value="DnaA_dom"/>
</dbReference>
<dbReference type="InterPro" id="IPR024633">
    <property type="entry name" value="DnaA_N_dom"/>
</dbReference>
<dbReference type="InterPro" id="IPR038454">
    <property type="entry name" value="DnaA_N_sf"/>
</dbReference>
<dbReference type="InterPro" id="IPR027417">
    <property type="entry name" value="P-loop_NTPase"/>
</dbReference>
<dbReference type="InterPro" id="IPR010921">
    <property type="entry name" value="Trp_repressor/repl_initiator"/>
</dbReference>
<dbReference type="NCBIfam" id="TIGR00362">
    <property type="entry name" value="DnaA"/>
    <property type="match status" value="1"/>
</dbReference>
<dbReference type="PANTHER" id="PTHR30050">
    <property type="entry name" value="CHROMOSOMAL REPLICATION INITIATOR PROTEIN DNAA"/>
    <property type="match status" value="1"/>
</dbReference>
<dbReference type="PANTHER" id="PTHR30050:SF2">
    <property type="entry name" value="CHROMOSOMAL REPLICATION INITIATOR PROTEIN DNAA"/>
    <property type="match status" value="1"/>
</dbReference>
<dbReference type="Pfam" id="PF00308">
    <property type="entry name" value="Bac_DnaA"/>
    <property type="match status" value="1"/>
</dbReference>
<dbReference type="Pfam" id="PF08299">
    <property type="entry name" value="Bac_DnaA_C"/>
    <property type="match status" value="1"/>
</dbReference>
<dbReference type="Pfam" id="PF11638">
    <property type="entry name" value="DnaA_N"/>
    <property type="match status" value="1"/>
</dbReference>
<dbReference type="PRINTS" id="PR00051">
    <property type="entry name" value="DNAA"/>
</dbReference>
<dbReference type="SMART" id="SM00382">
    <property type="entry name" value="AAA"/>
    <property type="match status" value="1"/>
</dbReference>
<dbReference type="SMART" id="SM00760">
    <property type="entry name" value="Bac_DnaA_C"/>
    <property type="match status" value="1"/>
</dbReference>
<dbReference type="SUPFAM" id="SSF52540">
    <property type="entry name" value="P-loop containing nucleoside triphosphate hydrolases"/>
    <property type="match status" value="1"/>
</dbReference>
<dbReference type="SUPFAM" id="SSF48295">
    <property type="entry name" value="TrpR-like"/>
    <property type="match status" value="1"/>
</dbReference>
<dbReference type="PROSITE" id="PS01008">
    <property type="entry name" value="DNAA"/>
    <property type="match status" value="1"/>
</dbReference>
<gene>
    <name evidence="1" type="primary">dnaA</name>
    <name type="ordered locus">BRADO0001</name>
</gene>
<feature type="chain" id="PRO_1000048611" description="Chromosomal replication initiator protein DnaA">
    <location>
        <begin position="1"/>
        <end position="476"/>
    </location>
</feature>
<feature type="region of interest" description="Domain I, interacts with DnaA modulators" evidence="1">
    <location>
        <begin position="1"/>
        <end position="73"/>
    </location>
</feature>
<feature type="region of interest" description="Domain II" evidence="1">
    <location>
        <begin position="73"/>
        <end position="132"/>
    </location>
</feature>
<feature type="region of interest" description="Disordered" evidence="2">
    <location>
        <begin position="92"/>
        <end position="115"/>
    </location>
</feature>
<feature type="region of interest" description="Domain III, AAA+ region" evidence="1">
    <location>
        <begin position="133"/>
        <end position="355"/>
    </location>
</feature>
<feature type="region of interest" description="Domain IV, binds dsDNA" evidence="1">
    <location>
        <begin position="356"/>
        <end position="476"/>
    </location>
</feature>
<feature type="compositionally biased region" description="Basic and acidic residues" evidence="2">
    <location>
        <begin position="99"/>
        <end position="112"/>
    </location>
</feature>
<feature type="binding site" evidence="1">
    <location>
        <position position="180"/>
    </location>
    <ligand>
        <name>ATP</name>
        <dbReference type="ChEBI" id="CHEBI:30616"/>
    </ligand>
</feature>
<feature type="binding site" evidence="1">
    <location>
        <position position="182"/>
    </location>
    <ligand>
        <name>ATP</name>
        <dbReference type="ChEBI" id="CHEBI:30616"/>
    </ligand>
</feature>
<feature type="binding site" evidence="1">
    <location>
        <position position="183"/>
    </location>
    <ligand>
        <name>ATP</name>
        <dbReference type="ChEBI" id="CHEBI:30616"/>
    </ligand>
</feature>
<feature type="binding site" evidence="1">
    <location>
        <position position="184"/>
    </location>
    <ligand>
        <name>ATP</name>
        <dbReference type="ChEBI" id="CHEBI:30616"/>
    </ligand>
</feature>